<evidence type="ECO:0000255" key="1">
    <source>
        <dbReference type="HAMAP-Rule" id="MF_00008"/>
    </source>
</evidence>
<name>TYSY_FRATF</name>
<reference key="1">
    <citation type="journal article" date="2009" name="PLoS ONE">
        <title>Complete genome sequence of Francisella tularensis subspecies holarctica FTNF002-00.</title>
        <authorList>
            <person name="Barabote R.D."/>
            <person name="Xie G."/>
            <person name="Brettin T.S."/>
            <person name="Hinrichs S.H."/>
            <person name="Fey P.D."/>
            <person name="Jay J.J."/>
            <person name="Engle J.L."/>
            <person name="Godbole S.D."/>
            <person name="Noronha J.M."/>
            <person name="Scheuermann R.H."/>
            <person name="Zhou L.W."/>
            <person name="Lion C."/>
            <person name="Dempsey M.P."/>
        </authorList>
    </citation>
    <scope>NUCLEOTIDE SEQUENCE [LARGE SCALE GENOMIC DNA]</scope>
    <source>
        <strain>FTNF002-00 / FTA</strain>
    </source>
</reference>
<dbReference type="EC" id="2.1.1.45" evidence="1"/>
<dbReference type="EMBL" id="CP000803">
    <property type="protein sequence ID" value="ABU61231.1"/>
    <property type="molecule type" value="Genomic_DNA"/>
</dbReference>
<dbReference type="RefSeq" id="WP_003015196.1">
    <property type="nucleotide sequence ID" value="NC_009749.1"/>
</dbReference>
<dbReference type="SMR" id="A7NB78"/>
<dbReference type="KEGG" id="fta:FTA_0755"/>
<dbReference type="HOGENOM" id="CLU_021669_0_0_6"/>
<dbReference type="UniPathway" id="UPA00575"/>
<dbReference type="GO" id="GO:0005829">
    <property type="term" value="C:cytosol"/>
    <property type="evidence" value="ECO:0007669"/>
    <property type="project" value="TreeGrafter"/>
</dbReference>
<dbReference type="GO" id="GO:0004799">
    <property type="term" value="F:thymidylate synthase activity"/>
    <property type="evidence" value="ECO:0007669"/>
    <property type="project" value="UniProtKB-UniRule"/>
</dbReference>
<dbReference type="GO" id="GO:0006231">
    <property type="term" value="P:dTMP biosynthetic process"/>
    <property type="evidence" value="ECO:0007669"/>
    <property type="project" value="UniProtKB-UniRule"/>
</dbReference>
<dbReference type="GO" id="GO:0006235">
    <property type="term" value="P:dTTP biosynthetic process"/>
    <property type="evidence" value="ECO:0007669"/>
    <property type="project" value="UniProtKB-UniRule"/>
</dbReference>
<dbReference type="GO" id="GO:0032259">
    <property type="term" value="P:methylation"/>
    <property type="evidence" value="ECO:0007669"/>
    <property type="project" value="UniProtKB-KW"/>
</dbReference>
<dbReference type="CDD" id="cd00351">
    <property type="entry name" value="TS_Pyrimidine_HMase"/>
    <property type="match status" value="1"/>
</dbReference>
<dbReference type="FunFam" id="3.30.572.10:FF:000013">
    <property type="entry name" value="Thymidylate synthase"/>
    <property type="match status" value="1"/>
</dbReference>
<dbReference type="Gene3D" id="3.30.572.10">
    <property type="entry name" value="Thymidylate synthase/dCMP hydroxymethylase domain"/>
    <property type="match status" value="1"/>
</dbReference>
<dbReference type="HAMAP" id="MF_00008">
    <property type="entry name" value="Thymidy_synth_bact"/>
    <property type="match status" value="1"/>
</dbReference>
<dbReference type="InterPro" id="IPR045097">
    <property type="entry name" value="Thymidate_synth/dCMP_Mease"/>
</dbReference>
<dbReference type="InterPro" id="IPR023451">
    <property type="entry name" value="Thymidate_synth/dCMP_Mease_dom"/>
</dbReference>
<dbReference type="InterPro" id="IPR036926">
    <property type="entry name" value="Thymidate_synth/dCMP_Mease_sf"/>
</dbReference>
<dbReference type="InterPro" id="IPR000398">
    <property type="entry name" value="Thymidylate_synthase"/>
</dbReference>
<dbReference type="NCBIfam" id="NF002497">
    <property type="entry name" value="PRK01827.1-3"/>
    <property type="match status" value="1"/>
</dbReference>
<dbReference type="NCBIfam" id="NF002499">
    <property type="entry name" value="PRK01827.1-5"/>
    <property type="match status" value="1"/>
</dbReference>
<dbReference type="NCBIfam" id="TIGR03284">
    <property type="entry name" value="thym_sym"/>
    <property type="match status" value="2"/>
</dbReference>
<dbReference type="PANTHER" id="PTHR11548">
    <property type="entry name" value="THYMIDYLATE SYNTHASE 1"/>
    <property type="match status" value="1"/>
</dbReference>
<dbReference type="PANTHER" id="PTHR11548:SF1">
    <property type="entry name" value="THYMIDYLATE SYNTHASE 1"/>
    <property type="match status" value="1"/>
</dbReference>
<dbReference type="Pfam" id="PF00303">
    <property type="entry name" value="Thymidylat_synt"/>
    <property type="match status" value="1"/>
</dbReference>
<dbReference type="PRINTS" id="PR00108">
    <property type="entry name" value="THYMDSNTHASE"/>
</dbReference>
<dbReference type="SUPFAM" id="SSF55831">
    <property type="entry name" value="Thymidylate synthase/dCMP hydroxymethylase"/>
    <property type="match status" value="1"/>
</dbReference>
<gene>
    <name evidence="1" type="primary">thyA</name>
    <name type="ordered locus">FTA_0755</name>
</gene>
<proteinExistence type="inferred from homology"/>
<sequence length="274" mass="31415">MREYLNFLKYIKENGVLKNDRTGTGTRSIFGYQMRFDLQKGFPLVTTKKIHIPSVVHELLWFLSGSTNIKYLNDNNVRIWNEWATVDGELGPIYGKQWRDFNGQGIDQIADVIQMLKTNPNSRRILVLAWNPCVVPSEKISPQENVVKGNSALPPCHAMFQFYVANNKLSCMLTQRSADAFLGVPFNIASYSLLTHMVAQQCNLDVGELIWSGGDCHIYNNHIEQVNEQLSREPLALPTLKILRKSNSIFDYKYEDFEFENYNHHPAIKAKISV</sequence>
<organism>
    <name type="scientific">Francisella tularensis subsp. holarctica (strain FTNF002-00 / FTA)</name>
    <dbReference type="NCBI Taxonomy" id="458234"/>
    <lineage>
        <taxon>Bacteria</taxon>
        <taxon>Pseudomonadati</taxon>
        <taxon>Pseudomonadota</taxon>
        <taxon>Gammaproteobacteria</taxon>
        <taxon>Thiotrichales</taxon>
        <taxon>Francisellaceae</taxon>
        <taxon>Francisella</taxon>
    </lineage>
</organism>
<keyword id="KW-0963">Cytoplasm</keyword>
<keyword id="KW-0489">Methyltransferase</keyword>
<keyword id="KW-0545">Nucleotide biosynthesis</keyword>
<keyword id="KW-0808">Transferase</keyword>
<comment type="function">
    <text evidence="1">Catalyzes the reductive methylation of 2'-deoxyuridine-5'-monophosphate (dUMP) to 2'-deoxythymidine-5'-monophosphate (dTMP) while utilizing 5,10-methylenetetrahydrofolate (mTHF) as the methyl donor and reductant in the reaction, yielding dihydrofolate (DHF) as a by-product. This enzymatic reaction provides an intracellular de novo source of dTMP, an essential precursor for DNA biosynthesis.</text>
</comment>
<comment type="catalytic activity">
    <reaction evidence="1">
        <text>dUMP + (6R)-5,10-methylene-5,6,7,8-tetrahydrofolate = 7,8-dihydrofolate + dTMP</text>
        <dbReference type="Rhea" id="RHEA:12104"/>
        <dbReference type="ChEBI" id="CHEBI:15636"/>
        <dbReference type="ChEBI" id="CHEBI:57451"/>
        <dbReference type="ChEBI" id="CHEBI:63528"/>
        <dbReference type="ChEBI" id="CHEBI:246422"/>
        <dbReference type="EC" id="2.1.1.45"/>
    </reaction>
</comment>
<comment type="pathway">
    <text evidence="1">Pyrimidine metabolism; dTTP biosynthesis.</text>
</comment>
<comment type="subunit">
    <text evidence="1">Homodimer.</text>
</comment>
<comment type="subcellular location">
    <subcellularLocation>
        <location evidence="1">Cytoplasm</location>
    </subcellularLocation>
</comment>
<comment type="similarity">
    <text evidence="1">Belongs to the thymidylate synthase family. Bacterial-type ThyA subfamily.</text>
</comment>
<protein>
    <recommendedName>
        <fullName evidence="1">Thymidylate synthase</fullName>
        <shortName evidence="1">TS</shortName>
        <shortName evidence="1">TSase</shortName>
        <ecNumber evidence="1">2.1.1.45</ecNumber>
    </recommendedName>
</protein>
<feature type="chain" id="PRO_1000000598" description="Thymidylate synthase">
    <location>
        <begin position="1"/>
        <end position="274"/>
    </location>
</feature>
<feature type="active site" description="Nucleophile" evidence="1">
    <location>
        <position position="156"/>
    </location>
</feature>
<feature type="binding site" description="in other chain" evidence="1">
    <location>
        <position position="21"/>
    </location>
    <ligand>
        <name>dUMP</name>
        <dbReference type="ChEBI" id="CHEBI:246422"/>
        <note>ligand shared between dimeric partners</note>
    </ligand>
</feature>
<feature type="binding site" evidence="1">
    <location>
        <position position="51"/>
    </location>
    <ligand>
        <name>(6R)-5,10-methylene-5,6,7,8-tetrahydrofolate</name>
        <dbReference type="ChEBI" id="CHEBI:15636"/>
    </ligand>
</feature>
<feature type="binding site" evidence="1">
    <location>
        <begin position="123"/>
        <end position="124"/>
    </location>
    <ligand>
        <name>dUMP</name>
        <dbReference type="ChEBI" id="CHEBI:246422"/>
        <note>ligand shared between dimeric partners</note>
    </ligand>
</feature>
<feature type="binding site" description="in other chain" evidence="1">
    <location>
        <begin position="176"/>
        <end position="179"/>
    </location>
    <ligand>
        <name>dUMP</name>
        <dbReference type="ChEBI" id="CHEBI:246422"/>
        <note>ligand shared between dimeric partners</note>
    </ligand>
</feature>
<feature type="binding site" evidence="1">
    <location>
        <position position="179"/>
    </location>
    <ligand>
        <name>(6R)-5,10-methylene-5,6,7,8-tetrahydrofolate</name>
        <dbReference type="ChEBI" id="CHEBI:15636"/>
    </ligand>
</feature>
<feature type="binding site" description="in other chain" evidence="1">
    <location>
        <position position="187"/>
    </location>
    <ligand>
        <name>dUMP</name>
        <dbReference type="ChEBI" id="CHEBI:246422"/>
        <note>ligand shared between dimeric partners</note>
    </ligand>
</feature>
<feature type="binding site" description="in other chain" evidence="1">
    <location>
        <begin position="217"/>
        <end position="219"/>
    </location>
    <ligand>
        <name>dUMP</name>
        <dbReference type="ChEBI" id="CHEBI:246422"/>
        <note>ligand shared between dimeric partners</note>
    </ligand>
</feature>
<feature type="binding site" evidence="1">
    <location>
        <position position="273"/>
    </location>
    <ligand>
        <name>(6R)-5,10-methylene-5,6,7,8-tetrahydrofolate</name>
        <dbReference type="ChEBI" id="CHEBI:15636"/>
    </ligand>
</feature>
<accession>A7NB78</accession>